<organism>
    <name type="scientific">Lactiplantibacillus plantarum (strain ATCC BAA-793 / NCIMB 8826 / WCFS1)</name>
    <name type="common">Lactobacillus plantarum</name>
    <dbReference type="NCBI Taxonomy" id="220668"/>
    <lineage>
        <taxon>Bacteria</taxon>
        <taxon>Bacillati</taxon>
        <taxon>Bacillota</taxon>
        <taxon>Bacilli</taxon>
        <taxon>Lactobacillales</taxon>
        <taxon>Lactobacillaceae</taxon>
        <taxon>Lactiplantibacillus</taxon>
    </lineage>
</organism>
<proteinExistence type="inferred from homology"/>
<protein>
    <recommendedName>
        <fullName evidence="1">UDP-N-acetylenolpyruvoylglucosamine reductase</fullName>
        <ecNumber evidence="1">1.3.1.98</ecNumber>
    </recommendedName>
    <alternativeName>
        <fullName evidence="1">UDP-N-acetylmuramate dehydrogenase</fullName>
    </alternativeName>
</protein>
<reference key="1">
    <citation type="journal article" date="2003" name="Proc. Natl. Acad. Sci. U.S.A.">
        <title>Complete genome sequence of Lactobacillus plantarum WCFS1.</title>
        <authorList>
            <person name="Kleerebezem M."/>
            <person name="Boekhorst J."/>
            <person name="van Kranenburg R."/>
            <person name="Molenaar D."/>
            <person name="Kuipers O.P."/>
            <person name="Leer R."/>
            <person name="Tarchini R."/>
            <person name="Peters S.A."/>
            <person name="Sandbrink H.M."/>
            <person name="Fiers M.W.E.J."/>
            <person name="Stiekema W."/>
            <person name="Klein Lankhorst R.M."/>
            <person name="Bron P.A."/>
            <person name="Hoffer S.M."/>
            <person name="Nierop Groot M.N."/>
            <person name="Kerkhoven R."/>
            <person name="De Vries M."/>
            <person name="Ursing B."/>
            <person name="De Vos W.M."/>
            <person name="Siezen R.J."/>
        </authorList>
    </citation>
    <scope>NUCLEOTIDE SEQUENCE [LARGE SCALE GENOMIC DNA]</scope>
    <source>
        <strain>ATCC BAA-793 / NCIMB 8826 / WCFS1</strain>
    </source>
</reference>
<reference key="2">
    <citation type="journal article" date="2012" name="J. Bacteriol.">
        <title>Complete resequencing and reannotation of the Lactobacillus plantarum WCFS1 genome.</title>
        <authorList>
            <person name="Siezen R.J."/>
            <person name="Francke C."/>
            <person name="Renckens B."/>
            <person name="Boekhorst J."/>
            <person name="Wels M."/>
            <person name="Kleerebezem M."/>
            <person name="van Hijum S.A."/>
        </authorList>
    </citation>
    <scope>NUCLEOTIDE SEQUENCE [LARGE SCALE GENOMIC DNA]</scope>
    <scope>GENOME REANNOTATION</scope>
    <source>
        <strain>ATCC BAA-793 / NCIMB 8826 / WCFS1</strain>
    </source>
</reference>
<accession>Q88YF4</accession>
<accession>F9UM33</accession>
<evidence type="ECO:0000255" key="1">
    <source>
        <dbReference type="HAMAP-Rule" id="MF_00037"/>
    </source>
</evidence>
<gene>
    <name evidence="1" type="primary">murB</name>
    <name type="ordered locus">lp_0814</name>
</gene>
<feature type="chain" id="PRO_0000179221" description="UDP-N-acetylenolpyruvoylglucosamine reductase">
    <location>
        <begin position="1"/>
        <end position="302"/>
    </location>
</feature>
<feature type="domain" description="FAD-binding PCMH-type" evidence="1">
    <location>
        <begin position="27"/>
        <end position="192"/>
    </location>
</feature>
<feature type="active site" evidence="1">
    <location>
        <position position="171"/>
    </location>
</feature>
<feature type="active site" description="Proton donor" evidence="1">
    <location>
        <position position="221"/>
    </location>
</feature>
<feature type="active site" evidence="1">
    <location>
        <position position="291"/>
    </location>
</feature>
<dbReference type="EC" id="1.3.1.98" evidence="1"/>
<dbReference type="EMBL" id="AL935263">
    <property type="protein sequence ID" value="CCC78272.1"/>
    <property type="molecule type" value="Genomic_DNA"/>
</dbReference>
<dbReference type="RefSeq" id="WP_003641067.1">
    <property type="nucleotide sequence ID" value="NC_004567.2"/>
</dbReference>
<dbReference type="RefSeq" id="YP_004888786.1">
    <property type="nucleotide sequence ID" value="NC_004567.2"/>
</dbReference>
<dbReference type="SMR" id="Q88YF4"/>
<dbReference type="STRING" id="220668.lp_0814"/>
<dbReference type="EnsemblBacteria" id="CCC78272">
    <property type="protein sequence ID" value="CCC78272"/>
    <property type="gene ID" value="lp_0814"/>
</dbReference>
<dbReference type="GeneID" id="77217334"/>
<dbReference type="KEGG" id="lpl:lp_0814"/>
<dbReference type="PATRIC" id="fig|220668.9.peg.689"/>
<dbReference type="eggNOG" id="COG0812">
    <property type="taxonomic scope" value="Bacteria"/>
</dbReference>
<dbReference type="HOGENOM" id="CLU_035304_1_1_9"/>
<dbReference type="OrthoDB" id="9804753at2"/>
<dbReference type="PhylomeDB" id="Q88YF4"/>
<dbReference type="UniPathway" id="UPA00219"/>
<dbReference type="Proteomes" id="UP000000432">
    <property type="component" value="Chromosome"/>
</dbReference>
<dbReference type="GO" id="GO:0005829">
    <property type="term" value="C:cytosol"/>
    <property type="evidence" value="ECO:0007669"/>
    <property type="project" value="TreeGrafter"/>
</dbReference>
<dbReference type="GO" id="GO:0071949">
    <property type="term" value="F:FAD binding"/>
    <property type="evidence" value="ECO:0007669"/>
    <property type="project" value="InterPro"/>
</dbReference>
<dbReference type="GO" id="GO:0008762">
    <property type="term" value="F:UDP-N-acetylmuramate dehydrogenase activity"/>
    <property type="evidence" value="ECO:0007669"/>
    <property type="project" value="UniProtKB-UniRule"/>
</dbReference>
<dbReference type="GO" id="GO:0051301">
    <property type="term" value="P:cell division"/>
    <property type="evidence" value="ECO:0007669"/>
    <property type="project" value="UniProtKB-KW"/>
</dbReference>
<dbReference type="GO" id="GO:0071555">
    <property type="term" value="P:cell wall organization"/>
    <property type="evidence" value="ECO:0007669"/>
    <property type="project" value="UniProtKB-KW"/>
</dbReference>
<dbReference type="GO" id="GO:0009252">
    <property type="term" value="P:peptidoglycan biosynthetic process"/>
    <property type="evidence" value="ECO:0007669"/>
    <property type="project" value="UniProtKB-UniRule"/>
</dbReference>
<dbReference type="GO" id="GO:0008360">
    <property type="term" value="P:regulation of cell shape"/>
    <property type="evidence" value="ECO:0007669"/>
    <property type="project" value="UniProtKB-KW"/>
</dbReference>
<dbReference type="Gene3D" id="3.30.465.10">
    <property type="match status" value="1"/>
</dbReference>
<dbReference type="Gene3D" id="3.90.78.10">
    <property type="entry name" value="UDP-N-acetylenolpyruvoylglucosamine reductase, C-terminal domain"/>
    <property type="match status" value="1"/>
</dbReference>
<dbReference type="Gene3D" id="3.30.43.10">
    <property type="entry name" value="Uridine Diphospho-n-acetylenolpyruvylglucosamine Reductase, domain 2"/>
    <property type="match status" value="1"/>
</dbReference>
<dbReference type="HAMAP" id="MF_00037">
    <property type="entry name" value="MurB"/>
    <property type="match status" value="1"/>
</dbReference>
<dbReference type="InterPro" id="IPR016166">
    <property type="entry name" value="FAD-bd_PCMH"/>
</dbReference>
<dbReference type="InterPro" id="IPR036318">
    <property type="entry name" value="FAD-bd_PCMH-like_sf"/>
</dbReference>
<dbReference type="InterPro" id="IPR016167">
    <property type="entry name" value="FAD-bd_PCMH_sub1"/>
</dbReference>
<dbReference type="InterPro" id="IPR016169">
    <property type="entry name" value="FAD-bd_PCMH_sub2"/>
</dbReference>
<dbReference type="InterPro" id="IPR003170">
    <property type="entry name" value="MurB"/>
</dbReference>
<dbReference type="InterPro" id="IPR011601">
    <property type="entry name" value="MurB_C"/>
</dbReference>
<dbReference type="InterPro" id="IPR036635">
    <property type="entry name" value="MurB_C_sf"/>
</dbReference>
<dbReference type="InterPro" id="IPR006094">
    <property type="entry name" value="Oxid_FAD_bind_N"/>
</dbReference>
<dbReference type="NCBIfam" id="TIGR00179">
    <property type="entry name" value="murB"/>
    <property type="match status" value="1"/>
</dbReference>
<dbReference type="NCBIfam" id="NF010480">
    <property type="entry name" value="PRK13905.1"/>
    <property type="match status" value="1"/>
</dbReference>
<dbReference type="PANTHER" id="PTHR21071">
    <property type="entry name" value="UDP-N-ACETYLENOLPYRUVOYLGLUCOSAMINE REDUCTASE"/>
    <property type="match status" value="1"/>
</dbReference>
<dbReference type="PANTHER" id="PTHR21071:SF4">
    <property type="entry name" value="UDP-N-ACETYLENOLPYRUVOYLGLUCOSAMINE REDUCTASE"/>
    <property type="match status" value="1"/>
</dbReference>
<dbReference type="Pfam" id="PF01565">
    <property type="entry name" value="FAD_binding_4"/>
    <property type="match status" value="1"/>
</dbReference>
<dbReference type="Pfam" id="PF02873">
    <property type="entry name" value="MurB_C"/>
    <property type="match status" value="1"/>
</dbReference>
<dbReference type="SUPFAM" id="SSF56176">
    <property type="entry name" value="FAD-binding/transporter-associated domain-like"/>
    <property type="match status" value="1"/>
</dbReference>
<dbReference type="SUPFAM" id="SSF56194">
    <property type="entry name" value="Uridine diphospho-N-Acetylenolpyruvylglucosamine reductase, MurB, C-terminal domain"/>
    <property type="match status" value="1"/>
</dbReference>
<dbReference type="PROSITE" id="PS51387">
    <property type="entry name" value="FAD_PCMH"/>
    <property type="match status" value="1"/>
</dbReference>
<keyword id="KW-0131">Cell cycle</keyword>
<keyword id="KW-0132">Cell division</keyword>
<keyword id="KW-0133">Cell shape</keyword>
<keyword id="KW-0961">Cell wall biogenesis/degradation</keyword>
<keyword id="KW-0963">Cytoplasm</keyword>
<keyword id="KW-0274">FAD</keyword>
<keyword id="KW-0285">Flavoprotein</keyword>
<keyword id="KW-0521">NADP</keyword>
<keyword id="KW-0560">Oxidoreductase</keyword>
<keyword id="KW-0573">Peptidoglycan synthesis</keyword>
<keyword id="KW-1185">Reference proteome</keyword>
<sequence length="302" mass="32333">MTKDVLATFPAIEIKKNESLSHYTNTKTGGPADYVAFPKSISETKALITFANEQNLPLTVIGNASNLIVKDGGIRGLTIILTRMKQIHASGTKVVAEAGAAIIATTKVACGASLTGLEFAAGIPGSVGGAIFMNAGAYGGEMSEVVETVTVLTPAGQLKTLDHDELDFGYRHSTIQDYDDIVVSVTFGLKPGNQTKIQARMDELNTLRAAKQPLEWPSCGSVFKRPTGYFTGKLIHDAGLQGHRIGGAEVSKKHAGFIINVDHATATDYMDMIHYVQKVVFERFGVHLQTEVRIIGEDVVQG</sequence>
<name>MURB_LACPL</name>
<comment type="function">
    <text evidence="1">Cell wall formation.</text>
</comment>
<comment type="catalytic activity">
    <reaction evidence="1">
        <text>UDP-N-acetyl-alpha-D-muramate + NADP(+) = UDP-N-acetyl-3-O-(1-carboxyvinyl)-alpha-D-glucosamine + NADPH + H(+)</text>
        <dbReference type="Rhea" id="RHEA:12248"/>
        <dbReference type="ChEBI" id="CHEBI:15378"/>
        <dbReference type="ChEBI" id="CHEBI:57783"/>
        <dbReference type="ChEBI" id="CHEBI:58349"/>
        <dbReference type="ChEBI" id="CHEBI:68483"/>
        <dbReference type="ChEBI" id="CHEBI:70757"/>
        <dbReference type="EC" id="1.3.1.98"/>
    </reaction>
</comment>
<comment type="cofactor">
    <cofactor evidence="1">
        <name>FAD</name>
        <dbReference type="ChEBI" id="CHEBI:57692"/>
    </cofactor>
</comment>
<comment type="pathway">
    <text evidence="1">Cell wall biogenesis; peptidoglycan biosynthesis.</text>
</comment>
<comment type="subcellular location">
    <subcellularLocation>
        <location evidence="1">Cytoplasm</location>
    </subcellularLocation>
</comment>
<comment type="similarity">
    <text evidence="1">Belongs to the MurB family.</text>
</comment>